<organism>
    <name type="scientific">Synechococcus sp. (strain RCC307)</name>
    <dbReference type="NCBI Taxonomy" id="316278"/>
    <lineage>
        <taxon>Bacteria</taxon>
        <taxon>Bacillati</taxon>
        <taxon>Cyanobacteriota</taxon>
        <taxon>Cyanophyceae</taxon>
        <taxon>Synechococcales</taxon>
        <taxon>Synechococcaceae</taxon>
        <taxon>Synechococcus</taxon>
    </lineage>
</organism>
<name>IF3_SYNR3</name>
<reference key="1">
    <citation type="submission" date="2006-05" db="EMBL/GenBank/DDBJ databases">
        <authorList>
            <consortium name="Genoscope"/>
        </authorList>
    </citation>
    <scope>NUCLEOTIDE SEQUENCE [LARGE SCALE GENOMIC DNA]</scope>
    <source>
        <strain>RCC307</strain>
    </source>
</reference>
<proteinExistence type="inferred from homology"/>
<keyword id="KW-0963">Cytoplasm</keyword>
<keyword id="KW-0396">Initiation factor</keyword>
<keyword id="KW-0648">Protein biosynthesis</keyword>
<keyword id="KW-1185">Reference proteome</keyword>
<gene>
    <name evidence="1" type="primary">infC</name>
    <name type="ordered locus">SynRCC307_0090</name>
</gene>
<protein>
    <recommendedName>
        <fullName evidence="1">Translation initiation factor IF-3</fullName>
    </recommendedName>
</protein>
<dbReference type="EMBL" id="CT978603">
    <property type="protein sequence ID" value="CAK26993.1"/>
    <property type="molecule type" value="Genomic_DNA"/>
</dbReference>
<dbReference type="SMR" id="A5GQ34"/>
<dbReference type="STRING" id="316278.SynRCC307_0090"/>
<dbReference type="KEGG" id="syr:SynRCC307_0090"/>
<dbReference type="eggNOG" id="COG0290">
    <property type="taxonomic scope" value="Bacteria"/>
</dbReference>
<dbReference type="HOGENOM" id="CLU_054919_3_1_3"/>
<dbReference type="OrthoDB" id="9806014at2"/>
<dbReference type="Proteomes" id="UP000001115">
    <property type="component" value="Chromosome"/>
</dbReference>
<dbReference type="GO" id="GO:0005829">
    <property type="term" value="C:cytosol"/>
    <property type="evidence" value="ECO:0007669"/>
    <property type="project" value="TreeGrafter"/>
</dbReference>
<dbReference type="GO" id="GO:0016020">
    <property type="term" value="C:membrane"/>
    <property type="evidence" value="ECO:0007669"/>
    <property type="project" value="TreeGrafter"/>
</dbReference>
<dbReference type="GO" id="GO:0043022">
    <property type="term" value="F:ribosome binding"/>
    <property type="evidence" value="ECO:0007669"/>
    <property type="project" value="TreeGrafter"/>
</dbReference>
<dbReference type="GO" id="GO:0003743">
    <property type="term" value="F:translation initiation factor activity"/>
    <property type="evidence" value="ECO:0007669"/>
    <property type="project" value="UniProtKB-UniRule"/>
</dbReference>
<dbReference type="GO" id="GO:0032790">
    <property type="term" value="P:ribosome disassembly"/>
    <property type="evidence" value="ECO:0007669"/>
    <property type="project" value="TreeGrafter"/>
</dbReference>
<dbReference type="FunFam" id="3.10.20.80:FF:000001">
    <property type="entry name" value="Translation initiation factor IF-3"/>
    <property type="match status" value="1"/>
</dbReference>
<dbReference type="FunFam" id="3.30.110.10:FF:000001">
    <property type="entry name" value="Translation initiation factor IF-3"/>
    <property type="match status" value="1"/>
</dbReference>
<dbReference type="Gene3D" id="3.30.110.10">
    <property type="entry name" value="Translation initiation factor 3 (IF-3), C-terminal domain"/>
    <property type="match status" value="1"/>
</dbReference>
<dbReference type="Gene3D" id="3.10.20.80">
    <property type="entry name" value="Translation initiation factor 3 (IF-3), N-terminal domain"/>
    <property type="match status" value="1"/>
</dbReference>
<dbReference type="HAMAP" id="MF_00080">
    <property type="entry name" value="IF_3"/>
    <property type="match status" value="1"/>
</dbReference>
<dbReference type="InterPro" id="IPR036788">
    <property type="entry name" value="T_IF-3_C_sf"/>
</dbReference>
<dbReference type="InterPro" id="IPR036787">
    <property type="entry name" value="T_IF-3_N_sf"/>
</dbReference>
<dbReference type="InterPro" id="IPR019813">
    <property type="entry name" value="Translation_initiation_fac3_CS"/>
</dbReference>
<dbReference type="InterPro" id="IPR001288">
    <property type="entry name" value="Translation_initiation_fac_3"/>
</dbReference>
<dbReference type="InterPro" id="IPR019815">
    <property type="entry name" value="Translation_initiation_fac_3_C"/>
</dbReference>
<dbReference type="InterPro" id="IPR019814">
    <property type="entry name" value="Translation_initiation_fac_3_N"/>
</dbReference>
<dbReference type="NCBIfam" id="TIGR00168">
    <property type="entry name" value="infC"/>
    <property type="match status" value="1"/>
</dbReference>
<dbReference type="PANTHER" id="PTHR10938">
    <property type="entry name" value="TRANSLATION INITIATION FACTOR IF-3"/>
    <property type="match status" value="1"/>
</dbReference>
<dbReference type="PANTHER" id="PTHR10938:SF0">
    <property type="entry name" value="TRANSLATION INITIATION FACTOR IF-3, MITOCHONDRIAL"/>
    <property type="match status" value="1"/>
</dbReference>
<dbReference type="Pfam" id="PF00707">
    <property type="entry name" value="IF3_C"/>
    <property type="match status" value="1"/>
</dbReference>
<dbReference type="Pfam" id="PF05198">
    <property type="entry name" value="IF3_N"/>
    <property type="match status" value="1"/>
</dbReference>
<dbReference type="SUPFAM" id="SSF55200">
    <property type="entry name" value="Translation initiation factor IF3, C-terminal domain"/>
    <property type="match status" value="1"/>
</dbReference>
<dbReference type="SUPFAM" id="SSF54364">
    <property type="entry name" value="Translation initiation factor IF3, N-terminal domain"/>
    <property type="match status" value="1"/>
</dbReference>
<dbReference type="PROSITE" id="PS00938">
    <property type="entry name" value="IF3"/>
    <property type="match status" value="1"/>
</dbReference>
<evidence type="ECO:0000255" key="1">
    <source>
        <dbReference type="HAMAP-Rule" id="MF_00080"/>
    </source>
</evidence>
<evidence type="ECO:0000256" key="2">
    <source>
        <dbReference type="SAM" id="MobiDB-lite"/>
    </source>
</evidence>
<sequence length="215" mass="24537">MAPRPRFDRRAPVRELPNINDRINYPKLRVVDADGTQLGVISRDEALDVARERELDLVLVSEKADPPVCRIMDYGKFKFEQEKKAKEAKKKSHQTEVKEVKMRYKIDAHDYQVRIGQAVRFLKAGDKVKCTVIFRGREIQHTALAEKLLMRMAKDLEESAEVQQPPKREGRNMIMFLGPRKTPLQKDKPEQATKAERTLPIAKPPGKTAAPAAAN</sequence>
<accession>A5GQ34</accession>
<feature type="chain" id="PRO_1000004582" description="Translation initiation factor IF-3">
    <location>
        <begin position="1"/>
        <end position="215"/>
    </location>
</feature>
<feature type="region of interest" description="Disordered" evidence="2">
    <location>
        <begin position="159"/>
        <end position="215"/>
    </location>
</feature>
<feature type="compositionally biased region" description="Basic and acidic residues" evidence="2">
    <location>
        <begin position="184"/>
        <end position="197"/>
    </location>
</feature>
<feature type="compositionally biased region" description="Low complexity" evidence="2">
    <location>
        <begin position="200"/>
        <end position="215"/>
    </location>
</feature>
<comment type="function">
    <text evidence="1">IF-3 binds to the 30S ribosomal subunit and shifts the equilibrium between 70S ribosomes and their 50S and 30S subunits in favor of the free subunits, thus enhancing the availability of 30S subunits on which protein synthesis initiation begins.</text>
</comment>
<comment type="subunit">
    <text evidence="1">Monomer.</text>
</comment>
<comment type="subcellular location">
    <subcellularLocation>
        <location evidence="1">Cytoplasm</location>
    </subcellularLocation>
</comment>
<comment type="similarity">
    <text evidence="1">Belongs to the IF-3 family.</text>
</comment>